<gene>
    <name evidence="1" type="primary">uvrB</name>
    <name type="ordered locus">PXO_01374</name>
</gene>
<comment type="function">
    <text evidence="1">The UvrABC repair system catalyzes the recognition and processing of DNA lesions. A damage recognition complex composed of 2 UvrA and 2 UvrB subunits scans DNA for abnormalities. Upon binding of the UvrA(2)B(2) complex to a putative damaged site, the DNA wraps around one UvrB monomer. DNA wrap is dependent on ATP binding by UvrB and probably causes local melting of the DNA helix, facilitating insertion of UvrB beta-hairpin between the DNA strands. Then UvrB probes one DNA strand for the presence of a lesion. If a lesion is found the UvrA subunits dissociate and the UvrB-DNA preincision complex is formed. This complex is subsequently bound by UvrC and the second UvrB is released. If no lesion is found, the DNA wraps around the other UvrB subunit that will check the other stand for damage.</text>
</comment>
<comment type="subunit">
    <text evidence="1">Forms a heterotetramer with UvrA during the search for lesions. Interacts with UvrC in an incision complex.</text>
</comment>
<comment type="subcellular location">
    <subcellularLocation>
        <location evidence="1">Cytoplasm</location>
    </subcellularLocation>
</comment>
<comment type="domain">
    <text evidence="1">The beta-hairpin motif is involved in DNA binding.</text>
</comment>
<comment type="similarity">
    <text evidence="1">Belongs to the UvrB family.</text>
</comment>
<protein>
    <recommendedName>
        <fullName evidence="1">UvrABC system protein B</fullName>
        <shortName evidence="1">Protein UvrB</shortName>
    </recommendedName>
    <alternativeName>
        <fullName evidence="1">Excinuclease ABC subunit B</fullName>
    </alternativeName>
</protein>
<proteinExistence type="inferred from homology"/>
<reference key="1">
    <citation type="journal article" date="2008" name="BMC Genomics">
        <title>Genome sequence and rapid evolution of the rice pathogen Xanthomonas oryzae pv. oryzae PXO99A.</title>
        <authorList>
            <person name="Salzberg S.L."/>
            <person name="Sommer D.D."/>
            <person name="Schatz M.C."/>
            <person name="Phillippy A.M."/>
            <person name="Rabinowicz P.D."/>
            <person name="Tsuge S."/>
            <person name="Furutani A."/>
            <person name="Ochiai H."/>
            <person name="Delcher A.L."/>
            <person name="Kelley D."/>
            <person name="Madupu R."/>
            <person name="Puiu D."/>
            <person name="Radune D."/>
            <person name="Shumway M."/>
            <person name="Trapnell C."/>
            <person name="Aparna G."/>
            <person name="Jha G."/>
            <person name="Pandey A."/>
            <person name="Patil P.B."/>
            <person name="Ishihara H."/>
            <person name="Meyer D.F."/>
            <person name="Szurek B."/>
            <person name="Verdier V."/>
            <person name="Koebnik R."/>
            <person name="Dow J.M."/>
            <person name="Ryan R.P."/>
            <person name="Hirata H."/>
            <person name="Tsuyumu S."/>
            <person name="Won Lee S."/>
            <person name="Seo Y.-S."/>
            <person name="Sriariyanum M."/>
            <person name="Ronald P.C."/>
            <person name="Sonti R.V."/>
            <person name="Van Sluys M.-A."/>
            <person name="Leach J.E."/>
            <person name="White F.F."/>
            <person name="Bogdanove A.J."/>
        </authorList>
    </citation>
    <scope>NUCLEOTIDE SEQUENCE [LARGE SCALE GENOMIC DNA]</scope>
    <source>
        <strain>PXO99A</strain>
    </source>
</reference>
<keyword id="KW-0067">ATP-binding</keyword>
<keyword id="KW-0963">Cytoplasm</keyword>
<keyword id="KW-0227">DNA damage</keyword>
<keyword id="KW-0228">DNA excision</keyword>
<keyword id="KW-0234">DNA repair</keyword>
<keyword id="KW-0267">Excision nuclease</keyword>
<keyword id="KW-0347">Helicase</keyword>
<keyword id="KW-0378">Hydrolase</keyword>
<keyword id="KW-0547">Nucleotide-binding</keyword>
<keyword id="KW-0742">SOS response</keyword>
<dbReference type="EMBL" id="CP000967">
    <property type="protein sequence ID" value="ACD60004.1"/>
    <property type="molecule type" value="Genomic_DNA"/>
</dbReference>
<dbReference type="RefSeq" id="WP_011259712.1">
    <property type="nucleotide sequence ID" value="NC_010717.2"/>
</dbReference>
<dbReference type="SMR" id="B2SUN1"/>
<dbReference type="KEGG" id="xop:PXO_01374"/>
<dbReference type="eggNOG" id="COG0556">
    <property type="taxonomic scope" value="Bacteria"/>
</dbReference>
<dbReference type="HOGENOM" id="CLU_009621_2_1_6"/>
<dbReference type="Proteomes" id="UP000001740">
    <property type="component" value="Chromosome"/>
</dbReference>
<dbReference type="GO" id="GO:0005737">
    <property type="term" value="C:cytoplasm"/>
    <property type="evidence" value="ECO:0007669"/>
    <property type="project" value="UniProtKB-SubCell"/>
</dbReference>
<dbReference type="GO" id="GO:0009380">
    <property type="term" value="C:excinuclease repair complex"/>
    <property type="evidence" value="ECO:0007669"/>
    <property type="project" value="InterPro"/>
</dbReference>
<dbReference type="GO" id="GO:0005524">
    <property type="term" value="F:ATP binding"/>
    <property type="evidence" value="ECO:0007669"/>
    <property type="project" value="UniProtKB-UniRule"/>
</dbReference>
<dbReference type="GO" id="GO:0016887">
    <property type="term" value="F:ATP hydrolysis activity"/>
    <property type="evidence" value="ECO:0007669"/>
    <property type="project" value="InterPro"/>
</dbReference>
<dbReference type="GO" id="GO:0003677">
    <property type="term" value="F:DNA binding"/>
    <property type="evidence" value="ECO:0007669"/>
    <property type="project" value="UniProtKB-UniRule"/>
</dbReference>
<dbReference type="GO" id="GO:0009381">
    <property type="term" value="F:excinuclease ABC activity"/>
    <property type="evidence" value="ECO:0007669"/>
    <property type="project" value="UniProtKB-UniRule"/>
</dbReference>
<dbReference type="GO" id="GO:0004386">
    <property type="term" value="F:helicase activity"/>
    <property type="evidence" value="ECO:0007669"/>
    <property type="project" value="UniProtKB-KW"/>
</dbReference>
<dbReference type="GO" id="GO:0006289">
    <property type="term" value="P:nucleotide-excision repair"/>
    <property type="evidence" value="ECO:0007669"/>
    <property type="project" value="UniProtKB-UniRule"/>
</dbReference>
<dbReference type="GO" id="GO:0009432">
    <property type="term" value="P:SOS response"/>
    <property type="evidence" value="ECO:0007669"/>
    <property type="project" value="UniProtKB-UniRule"/>
</dbReference>
<dbReference type="CDD" id="cd17916">
    <property type="entry name" value="DEXHc_UvrB"/>
    <property type="match status" value="1"/>
</dbReference>
<dbReference type="CDD" id="cd18790">
    <property type="entry name" value="SF2_C_UvrB"/>
    <property type="match status" value="1"/>
</dbReference>
<dbReference type="FunFam" id="3.40.50.300:FF:000477">
    <property type="entry name" value="UvrABC system protein B"/>
    <property type="match status" value="1"/>
</dbReference>
<dbReference type="Gene3D" id="6.10.140.240">
    <property type="match status" value="1"/>
</dbReference>
<dbReference type="Gene3D" id="3.40.50.300">
    <property type="entry name" value="P-loop containing nucleotide triphosphate hydrolases"/>
    <property type="match status" value="3"/>
</dbReference>
<dbReference type="Gene3D" id="4.10.860.10">
    <property type="entry name" value="UVR domain"/>
    <property type="match status" value="1"/>
</dbReference>
<dbReference type="HAMAP" id="MF_00204">
    <property type="entry name" value="UvrB"/>
    <property type="match status" value="1"/>
</dbReference>
<dbReference type="InterPro" id="IPR006935">
    <property type="entry name" value="Helicase/UvrB_N"/>
</dbReference>
<dbReference type="InterPro" id="IPR014001">
    <property type="entry name" value="Helicase_ATP-bd"/>
</dbReference>
<dbReference type="InterPro" id="IPR001650">
    <property type="entry name" value="Helicase_C-like"/>
</dbReference>
<dbReference type="InterPro" id="IPR027417">
    <property type="entry name" value="P-loop_NTPase"/>
</dbReference>
<dbReference type="InterPro" id="IPR001943">
    <property type="entry name" value="UVR_dom"/>
</dbReference>
<dbReference type="InterPro" id="IPR036876">
    <property type="entry name" value="UVR_dom_sf"/>
</dbReference>
<dbReference type="InterPro" id="IPR004807">
    <property type="entry name" value="UvrB"/>
</dbReference>
<dbReference type="InterPro" id="IPR041471">
    <property type="entry name" value="UvrB_inter"/>
</dbReference>
<dbReference type="InterPro" id="IPR024759">
    <property type="entry name" value="UvrB_YAD/RRR_dom"/>
</dbReference>
<dbReference type="NCBIfam" id="NF003673">
    <property type="entry name" value="PRK05298.1"/>
    <property type="match status" value="1"/>
</dbReference>
<dbReference type="NCBIfam" id="TIGR00631">
    <property type="entry name" value="uvrb"/>
    <property type="match status" value="1"/>
</dbReference>
<dbReference type="PANTHER" id="PTHR24029">
    <property type="entry name" value="UVRABC SYSTEM PROTEIN B"/>
    <property type="match status" value="1"/>
</dbReference>
<dbReference type="PANTHER" id="PTHR24029:SF0">
    <property type="entry name" value="UVRABC SYSTEM PROTEIN B"/>
    <property type="match status" value="1"/>
</dbReference>
<dbReference type="Pfam" id="PF00271">
    <property type="entry name" value="Helicase_C"/>
    <property type="match status" value="1"/>
</dbReference>
<dbReference type="Pfam" id="PF04851">
    <property type="entry name" value="ResIII"/>
    <property type="match status" value="1"/>
</dbReference>
<dbReference type="Pfam" id="PF02151">
    <property type="entry name" value="UVR"/>
    <property type="match status" value="1"/>
</dbReference>
<dbReference type="Pfam" id="PF12344">
    <property type="entry name" value="UvrB"/>
    <property type="match status" value="1"/>
</dbReference>
<dbReference type="Pfam" id="PF17757">
    <property type="entry name" value="UvrB_inter"/>
    <property type="match status" value="1"/>
</dbReference>
<dbReference type="SMART" id="SM00487">
    <property type="entry name" value="DEXDc"/>
    <property type="match status" value="1"/>
</dbReference>
<dbReference type="SMART" id="SM00490">
    <property type="entry name" value="HELICc"/>
    <property type="match status" value="1"/>
</dbReference>
<dbReference type="SUPFAM" id="SSF46600">
    <property type="entry name" value="C-terminal UvrC-binding domain of UvrB"/>
    <property type="match status" value="1"/>
</dbReference>
<dbReference type="SUPFAM" id="SSF52540">
    <property type="entry name" value="P-loop containing nucleoside triphosphate hydrolases"/>
    <property type="match status" value="2"/>
</dbReference>
<dbReference type="PROSITE" id="PS51192">
    <property type="entry name" value="HELICASE_ATP_BIND_1"/>
    <property type="match status" value="1"/>
</dbReference>
<dbReference type="PROSITE" id="PS51194">
    <property type="entry name" value="HELICASE_CTER"/>
    <property type="match status" value="1"/>
</dbReference>
<dbReference type="PROSITE" id="PS50151">
    <property type="entry name" value="UVR"/>
    <property type="match status" value="1"/>
</dbReference>
<evidence type="ECO:0000255" key="1">
    <source>
        <dbReference type="HAMAP-Rule" id="MF_00204"/>
    </source>
</evidence>
<evidence type="ECO:0000256" key="2">
    <source>
        <dbReference type="SAM" id="MobiDB-lite"/>
    </source>
</evidence>
<feature type="chain" id="PRO_1000099578" description="UvrABC system protein B">
    <location>
        <begin position="1"/>
        <end position="673"/>
    </location>
</feature>
<feature type="domain" description="Helicase ATP-binding" evidence="1">
    <location>
        <begin position="26"/>
        <end position="183"/>
    </location>
</feature>
<feature type="domain" description="Helicase C-terminal" evidence="1">
    <location>
        <begin position="431"/>
        <end position="597"/>
    </location>
</feature>
<feature type="domain" description="UVR" evidence="1">
    <location>
        <begin position="635"/>
        <end position="670"/>
    </location>
</feature>
<feature type="region of interest" description="Disordered" evidence="2">
    <location>
        <begin position="601"/>
        <end position="631"/>
    </location>
</feature>
<feature type="short sequence motif" description="Beta-hairpin">
    <location>
        <begin position="92"/>
        <end position="115"/>
    </location>
</feature>
<feature type="compositionally biased region" description="Basic and acidic residues" evidence="2">
    <location>
        <begin position="618"/>
        <end position="630"/>
    </location>
</feature>
<feature type="binding site" evidence="1">
    <location>
        <begin position="39"/>
        <end position="46"/>
    </location>
    <ligand>
        <name>ATP</name>
        <dbReference type="ChEBI" id="CHEBI:30616"/>
    </ligand>
</feature>
<organism>
    <name type="scientific">Xanthomonas oryzae pv. oryzae (strain PXO99A)</name>
    <dbReference type="NCBI Taxonomy" id="360094"/>
    <lineage>
        <taxon>Bacteria</taxon>
        <taxon>Pseudomonadati</taxon>
        <taxon>Pseudomonadota</taxon>
        <taxon>Gammaproteobacteria</taxon>
        <taxon>Lysobacterales</taxon>
        <taxon>Lysobacteraceae</taxon>
        <taxon>Xanthomonas</taxon>
    </lineage>
</organism>
<name>UVRB_XANOP</name>
<accession>B2SUN1</accession>
<sequence>MTDRFQLVSPYSPAGDQPAAIDKLVANFEAGLAKQTLLGVTGSGKTYTIANVVQQVQKPTLVMAPNKTLAAQLYGEFKSFFPHNAVEYFVSYYDYYQPEAYVPSSDTFIEKDSSINEHIEQMRLSATKTLLSRRDSLVVATVSAIYGLGAPEDYLSLRLILSIGEHIDQRQLIRHLTDLQYTRNEFELTRGAFRVRGEVLDVFPAESDTEALRIELFDGDIEQLTLFDPLTGETLRKLQRYTVYPKTHYATTRERTLSAVDTIKEELKERLEQLYSQNKLVEAQRLAQRTQFDLEMMAEVGFCNGIENYSRHLTGKAPGEPPPTLFDYLPPDALLVIDESHVTIPQIGAMYKGDRSRKETLVEFGFRLPSALDNRPLRFEEWEARSPRSIYVSATPGPYELRESAGEVTELVVRPTGLIDPVVEIRPVGTQVDDLMSEIHERIKLGDRVLVTTLTKRMAENLTEYLGEHGIRVRYLHSDIDTVERVEIIRDLRLGKFDVLVGINLLREGLDMPEVSLVAILDADKEGFLRSTGSLIQTIGRAARNLRGKAILYADKMTRSMQAAIDESDRRREKQVEYNLEHGITPESVERPISDIMEGAREDAAEKKSGKGRSKSRQVAEETPDYRAMKPAEIAGKLKSLEQKMYQHAKDLEFEAAAQIRDQIQKLKTASLA</sequence>